<keyword id="KW-0175">Coiled coil</keyword>
<keyword id="KW-0472">Membrane</keyword>
<keyword id="KW-0496">Mitochondrion</keyword>
<keyword id="KW-0999">Mitochondrion inner membrane</keyword>
<keyword id="KW-1185">Reference proteome</keyword>
<keyword id="KW-0735">Signal-anchor</keyword>
<keyword id="KW-0812">Transmembrane</keyword>
<keyword id="KW-1133">Transmembrane helix</keyword>
<name>PHB7_ARATH</name>
<accession>Q9FFH5</accession>
<proteinExistence type="evidence at protein level"/>
<gene>
    <name type="primary">PHB7</name>
    <name type="ordered locus">At5g44140</name>
    <name type="ORF">MLN1.6</name>
</gene>
<comment type="function">
    <text evidence="1">Prohibitin probably acts as a holdase/unfoldase for the stabilization of newly synthesized mitochondrial proteins.</text>
</comment>
<comment type="subunit">
    <text evidence="4">Component of a prohibitin multimeric complex in mitochondrial membranes.</text>
</comment>
<comment type="subcellular location">
    <subcellularLocation>
        <location evidence="3 4">Mitochondrion inner membrane</location>
        <topology evidence="3 4">Single-pass type II membrane protein</topology>
    </subcellularLocation>
</comment>
<comment type="similarity">
    <text evidence="5">Belongs to the prohibitin family.</text>
</comment>
<dbReference type="EMBL" id="AB005239">
    <property type="protein sequence ID" value="BAB10981.1"/>
    <property type="molecule type" value="Genomic_DNA"/>
</dbReference>
<dbReference type="EMBL" id="CP002688">
    <property type="protein sequence ID" value="AED95066.1"/>
    <property type="molecule type" value="Genomic_DNA"/>
</dbReference>
<dbReference type="RefSeq" id="NP_199227.1">
    <property type="nucleotide sequence ID" value="NM_123781.2"/>
</dbReference>
<dbReference type="SMR" id="Q9FFH5"/>
<dbReference type="BioGRID" id="19687">
    <property type="interactions" value="6"/>
</dbReference>
<dbReference type="FunCoup" id="Q9FFH5">
    <property type="interactions" value="3142"/>
</dbReference>
<dbReference type="IntAct" id="Q9FFH5">
    <property type="interactions" value="1"/>
</dbReference>
<dbReference type="STRING" id="3702.Q9FFH5"/>
<dbReference type="PaxDb" id="3702-AT5G44140.1"/>
<dbReference type="ProteomicsDB" id="236347"/>
<dbReference type="EnsemblPlants" id="AT5G44140.1">
    <property type="protein sequence ID" value="AT5G44140.1"/>
    <property type="gene ID" value="AT5G44140"/>
</dbReference>
<dbReference type="GeneID" id="834437"/>
<dbReference type="Gramene" id="AT5G44140.1">
    <property type="protein sequence ID" value="AT5G44140.1"/>
    <property type="gene ID" value="AT5G44140"/>
</dbReference>
<dbReference type="KEGG" id="ath:AT5G44140"/>
<dbReference type="Araport" id="AT5G44140"/>
<dbReference type="TAIR" id="AT5G44140">
    <property type="gene designation" value="PHB7"/>
</dbReference>
<dbReference type="eggNOG" id="KOG3090">
    <property type="taxonomic scope" value="Eukaryota"/>
</dbReference>
<dbReference type="HOGENOM" id="CLU_047969_0_2_1"/>
<dbReference type="InParanoid" id="Q9FFH5"/>
<dbReference type="OMA" id="YCIGSSM"/>
<dbReference type="PhylomeDB" id="Q9FFH5"/>
<dbReference type="PRO" id="PR:Q9FFH5"/>
<dbReference type="Proteomes" id="UP000006548">
    <property type="component" value="Chromosome 5"/>
</dbReference>
<dbReference type="ExpressionAtlas" id="Q9FFH5">
    <property type="expression patterns" value="baseline and differential"/>
</dbReference>
<dbReference type="GO" id="GO:0005743">
    <property type="term" value="C:mitochondrial inner membrane"/>
    <property type="evidence" value="ECO:0007669"/>
    <property type="project" value="UniProtKB-SubCell"/>
</dbReference>
<dbReference type="GO" id="GO:0005739">
    <property type="term" value="C:mitochondrion"/>
    <property type="evidence" value="ECO:0000314"/>
    <property type="project" value="TAIR"/>
</dbReference>
<dbReference type="GO" id="GO:0009506">
    <property type="term" value="C:plasmodesma"/>
    <property type="evidence" value="ECO:0007005"/>
    <property type="project" value="TAIR"/>
</dbReference>
<dbReference type="CDD" id="cd03401">
    <property type="entry name" value="SPFH_prohibitin"/>
    <property type="match status" value="1"/>
</dbReference>
<dbReference type="FunFam" id="3.30.479.30:FF:000001">
    <property type="entry name" value="Prohibitin 2"/>
    <property type="match status" value="1"/>
</dbReference>
<dbReference type="Gene3D" id="3.30.479.30">
    <property type="entry name" value="Band 7 domain"/>
    <property type="match status" value="1"/>
</dbReference>
<dbReference type="InterPro" id="IPR001107">
    <property type="entry name" value="Band_7"/>
</dbReference>
<dbReference type="InterPro" id="IPR036013">
    <property type="entry name" value="Band_7/SPFH_dom_sf"/>
</dbReference>
<dbReference type="InterPro" id="IPR000163">
    <property type="entry name" value="Prohibitin"/>
</dbReference>
<dbReference type="PANTHER" id="PTHR23222">
    <property type="entry name" value="PROHIBITIN"/>
    <property type="match status" value="1"/>
</dbReference>
<dbReference type="PANTHER" id="PTHR23222:SF20">
    <property type="entry name" value="PROHIBITIN-2, MITOCHONDRIAL-RELATED"/>
    <property type="match status" value="1"/>
</dbReference>
<dbReference type="Pfam" id="PF01145">
    <property type="entry name" value="Band_7"/>
    <property type="match status" value="1"/>
</dbReference>
<dbReference type="PRINTS" id="PR00679">
    <property type="entry name" value="PROHIBITIN"/>
</dbReference>
<dbReference type="SMART" id="SM00244">
    <property type="entry name" value="PHB"/>
    <property type="match status" value="1"/>
</dbReference>
<dbReference type="SUPFAM" id="SSF117892">
    <property type="entry name" value="Band 7/SPFH domain"/>
    <property type="match status" value="1"/>
</dbReference>
<sequence length="278" mass="30759">MNVKKVPNVPGSPALSALLKLGVIGGLGLYCIGSSMYNVDGGHRAIVFNRFTGIKDRVYPEGTHFKIPLFERAIIYDVRSRPYVENSQTGSNDLQTVTIGLRVLTRPMGDRLPEIYRTLGQNYGERVLPSIINETLKAVVAQYNASHLITQREAVSREIRKIVTERAAKFNIALDDVSITNLKFGKEFTEAIEKKQVAAQEAERAKFIVEKAEQDKKSAIIRAQGEAKSAQLIGQAIANNEAFITLRKIEAAREIAQTIAKSANKVYLNSSDLLISKQ</sequence>
<evidence type="ECO:0000250" key="1"/>
<evidence type="ECO:0000255" key="2"/>
<evidence type="ECO:0000269" key="3">
    <source>
    </source>
</evidence>
<evidence type="ECO:0000269" key="4">
    <source>
    </source>
</evidence>
<evidence type="ECO:0000305" key="5"/>
<protein>
    <recommendedName>
        <fullName>Prohibitin-7, mitochondrial</fullName>
        <shortName>Atphb7</shortName>
    </recommendedName>
</protein>
<feature type="chain" id="PRO_0000420602" description="Prohibitin-7, mitochondrial">
    <location>
        <begin position="1"/>
        <end position="278"/>
    </location>
</feature>
<feature type="topological domain" description="Mitochondrial matrix" evidence="2">
    <location>
        <begin position="1"/>
        <end position="14"/>
    </location>
</feature>
<feature type="transmembrane region" description="Helical; Signal-anchor for type II membrane protein" evidence="2">
    <location>
        <begin position="15"/>
        <end position="37"/>
    </location>
</feature>
<feature type="topological domain" description="Mitochondrial intermembrane" evidence="2">
    <location>
        <begin position="38"/>
        <end position="278"/>
    </location>
</feature>
<feature type="coiled-coil region" evidence="2">
    <location>
        <begin position="186"/>
        <end position="220"/>
    </location>
</feature>
<organism>
    <name type="scientific">Arabidopsis thaliana</name>
    <name type="common">Mouse-ear cress</name>
    <dbReference type="NCBI Taxonomy" id="3702"/>
    <lineage>
        <taxon>Eukaryota</taxon>
        <taxon>Viridiplantae</taxon>
        <taxon>Streptophyta</taxon>
        <taxon>Embryophyta</taxon>
        <taxon>Tracheophyta</taxon>
        <taxon>Spermatophyta</taxon>
        <taxon>Magnoliopsida</taxon>
        <taxon>eudicotyledons</taxon>
        <taxon>Gunneridae</taxon>
        <taxon>Pentapetalae</taxon>
        <taxon>rosids</taxon>
        <taxon>malvids</taxon>
        <taxon>Brassicales</taxon>
        <taxon>Brassicaceae</taxon>
        <taxon>Camelineae</taxon>
        <taxon>Arabidopsis</taxon>
    </lineage>
</organism>
<reference key="1">
    <citation type="journal article" date="1997" name="DNA Res.">
        <title>Structural analysis of Arabidopsis thaliana chromosome 5. I. Sequence features of the 1.6 Mb regions covered by twenty physically assigned P1 clones.</title>
        <authorList>
            <person name="Sato S."/>
            <person name="Kotani H."/>
            <person name="Nakamura Y."/>
            <person name="Kaneko T."/>
            <person name="Asamizu E."/>
            <person name="Fukami M."/>
            <person name="Miyajima N."/>
            <person name="Tabata S."/>
        </authorList>
    </citation>
    <scope>NUCLEOTIDE SEQUENCE [LARGE SCALE GENOMIC DNA]</scope>
    <source>
        <strain>cv. Columbia</strain>
    </source>
</reference>
<reference key="2">
    <citation type="journal article" date="2017" name="Plant J.">
        <title>Araport11: a complete reannotation of the Arabidopsis thaliana reference genome.</title>
        <authorList>
            <person name="Cheng C.Y."/>
            <person name="Krishnakumar V."/>
            <person name="Chan A.P."/>
            <person name="Thibaud-Nissen F."/>
            <person name="Schobel S."/>
            <person name="Town C.D."/>
        </authorList>
    </citation>
    <scope>GENOME REANNOTATION</scope>
    <source>
        <strain>cv. Columbia</strain>
    </source>
</reference>
<reference key="3">
    <citation type="journal article" date="2004" name="Plant Cell">
        <title>Experimental analysis of the Arabidopsis mitochondrial proteome highlights signaling and regulatory components, provides assessment of targeting prediction programs, and indicates plant-specific mitochondrial proteins.</title>
        <authorList>
            <person name="Heazlewood J.L."/>
            <person name="Tonti-Filippini J.S."/>
            <person name="Gout A.M."/>
            <person name="Day D.A."/>
            <person name="Whelan J."/>
            <person name="Millar A.H."/>
        </authorList>
    </citation>
    <scope>IDENTIFICATION BY MASS SPECTROMETRY</scope>
    <scope>SUBCELLULAR LOCATION [LARGE SCALE ANALYSIS]</scope>
    <source>
        <strain>cv. Landsberg erecta</strain>
    </source>
</reference>
<reference key="4">
    <citation type="journal article" date="2008" name="J. Proteome Res.">
        <title>Resolving and identifying protein components of plant mitochondrial respiratory complexes using three dimensions of gel electrophoresis.</title>
        <authorList>
            <person name="Meyer E.H."/>
            <person name="Taylor N.L."/>
            <person name="Millar A.H."/>
        </authorList>
    </citation>
    <scope>IDENTIFICATION BY MASS SPECTROMETRY</scope>
    <scope>SUBCELLULAR LOCATION</scope>
    <scope>SUBUNIT</scope>
</reference>